<feature type="chain" id="PRO_0000323511" description="Probable E3 ubiquitin-protein ligase IRF2BPL">
    <location>
        <begin position="1"/>
        <end position="794"/>
    </location>
</feature>
<feature type="zinc finger region" description="RING-type; degenerate">
    <location>
        <begin position="713"/>
        <end position="760"/>
    </location>
</feature>
<feature type="region of interest" description="Disordered" evidence="4">
    <location>
        <begin position="172"/>
        <end position="345"/>
    </location>
</feature>
<feature type="region of interest" description="Disordered" evidence="4">
    <location>
        <begin position="513"/>
        <end position="554"/>
    </location>
</feature>
<feature type="region of interest" description="Disordered" evidence="4">
    <location>
        <begin position="583"/>
        <end position="669"/>
    </location>
</feature>
<feature type="coiled-coil region" evidence="3">
    <location>
        <begin position="95"/>
        <end position="130"/>
    </location>
</feature>
<feature type="coiled-coil region" evidence="3">
    <location>
        <begin position="334"/>
        <end position="369"/>
    </location>
</feature>
<feature type="compositionally biased region" description="Low complexity" evidence="4">
    <location>
        <begin position="216"/>
        <end position="225"/>
    </location>
</feature>
<feature type="compositionally biased region" description="Gly residues" evidence="4">
    <location>
        <begin position="230"/>
        <end position="246"/>
    </location>
</feature>
<feature type="compositionally biased region" description="Pro residues" evidence="4">
    <location>
        <begin position="282"/>
        <end position="291"/>
    </location>
</feature>
<feature type="compositionally biased region" description="Low complexity" evidence="4">
    <location>
        <begin position="302"/>
        <end position="322"/>
    </location>
</feature>
<feature type="compositionally biased region" description="Low complexity" evidence="4">
    <location>
        <begin position="520"/>
        <end position="538"/>
    </location>
</feature>
<feature type="compositionally biased region" description="Pro residues" evidence="4">
    <location>
        <begin position="593"/>
        <end position="602"/>
    </location>
</feature>
<feature type="compositionally biased region" description="Polar residues" evidence="4">
    <location>
        <begin position="605"/>
        <end position="619"/>
    </location>
</feature>
<feature type="compositionally biased region" description="Low complexity" evidence="4">
    <location>
        <begin position="646"/>
        <end position="665"/>
    </location>
</feature>
<feature type="modified residue" description="Phosphoserine" evidence="2">
    <location>
        <position position="69"/>
    </location>
</feature>
<feature type="modified residue" description="Phosphoserine" evidence="2">
    <location>
        <position position="213"/>
    </location>
</feature>
<feature type="modified residue" description="Phosphoserine" evidence="2">
    <location>
        <position position="517"/>
    </location>
</feature>
<feature type="modified residue" description="Phosphoserine" evidence="2">
    <location>
        <position position="545"/>
    </location>
</feature>
<feature type="modified residue" description="Phosphoserine" evidence="2">
    <location>
        <position position="637"/>
    </location>
</feature>
<feature type="modified residue" description="Phosphoserine" evidence="2">
    <location>
        <position position="655"/>
    </location>
</feature>
<feature type="modified residue" description="Phosphoserine" evidence="2">
    <location>
        <position position="656"/>
    </location>
</feature>
<feature type="modified residue" description="Phosphoserine" evidence="2">
    <location>
        <position position="657"/>
    </location>
</feature>
<feature type="modified residue" description="Phosphoserine" evidence="2">
    <location>
        <position position="660"/>
    </location>
</feature>
<feature type="cross-link" description="Glycyl lysine isopeptide (Lys-Gly) (interchain with G-Cter in SUMO2)" evidence="2">
    <location>
        <position position="79"/>
    </location>
</feature>
<dbReference type="EC" id="2.3.2.27" evidence="2"/>
<dbReference type="EMBL" id="DQ323548">
    <property type="protein sequence ID" value="ABC49849.1"/>
    <property type="molecule type" value="Genomic_DNA"/>
</dbReference>
<dbReference type="SMR" id="Q2MJS2"/>
<dbReference type="FunCoup" id="Q2MJS2">
    <property type="interactions" value="2123"/>
</dbReference>
<dbReference type="PaxDb" id="9544-ENSMMUP00000012987"/>
<dbReference type="eggNOG" id="KOG3579">
    <property type="taxonomic scope" value="Eukaryota"/>
</dbReference>
<dbReference type="InParanoid" id="Q2MJS2"/>
<dbReference type="UniPathway" id="UPA00143"/>
<dbReference type="Proteomes" id="UP000006718">
    <property type="component" value="Unassembled WGS sequence"/>
</dbReference>
<dbReference type="GO" id="GO:0005634">
    <property type="term" value="C:nucleus"/>
    <property type="evidence" value="ECO:0000314"/>
    <property type="project" value="ParkinsonsUK-UCL"/>
</dbReference>
<dbReference type="GO" id="GO:0003714">
    <property type="term" value="F:transcription corepressor activity"/>
    <property type="evidence" value="ECO:0000318"/>
    <property type="project" value="GO_Central"/>
</dbReference>
<dbReference type="GO" id="GO:0061630">
    <property type="term" value="F:ubiquitin protein ligase activity"/>
    <property type="evidence" value="ECO:0000250"/>
    <property type="project" value="UniProtKB"/>
</dbReference>
<dbReference type="GO" id="GO:0008270">
    <property type="term" value="F:zinc ion binding"/>
    <property type="evidence" value="ECO:0007669"/>
    <property type="project" value="UniProtKB-KW"/>
</dbReference>
<dbReference type="GO" id="GO:0046543">
    <property type="term" value="P:development of secondary female sexual characteristics"/>
    <property type="evidence" value="ECO:0000270"/>
    <property type="project" value="ParkinsonsUK-UCL"/>
</dbReference>
<dbReference type="GO" id="GO:0000122">
    <property type="term" value="P:negative regulation of transcription by RNA polymerase II"/>
    <property type="evidence" value="ECO:0000250"/>
    <property type="project" value="ParkinsonsUK-UCL"/>
</dbReference>
<dbReference type="GO" id="GO:0045944">
    <property type="term" value="P:positive regulation of transcription by RNA polymerase II"/>
    <property type="evidence" value="ECO:0000250"/>
    <property type="project" value="ParkinsonsUK-UCL"/>
</dbReference>
<dbReference type="GO" id="GO:0016567">
    <property type="term" value="P:protein ubiquitination"/>
    <property type="evidence" value="ECO:0007669"/>
    <property type="project" value="UniProtKB-UniPathway"/>
</dbReference>
<dbReference type="GO" id="GO:0006357">
    <property type="term" value="P:regulation of transcription by RNA polymerase II"/>
    <property type="evidence" value="ECO:0000318"/>
    <property type="project" value="GO_Central"/>
</dbReference>
<dbReference type="CDD" id="cd16717">
    <property type="entry name" value="vRING-HC_IRF2BPL"/>
    <property type="match status" value="1"/>
</dbReference>
<dbReference type="FunFam" id="1.10.10.1580:FF:000001">
    <property type="entry name" value="interferon regulatory factor 2-binding protein 2"/>
    <property type="match status" value="1"/>
</dbReference>
<dbReference type="Gene3D" id="1.10.10.1580">
    <property type="entry name" value="Interferon regulatory factor 2-binding protein"/>
    <property type="match status" value="1"/>
</dbReference>
<dbReference type="InterPro" id="IPR044882">
    <property type="entry name" value="I2BP1/2_C3HC4-RING_sf"/>
</dbReference>
<dbReference type="InterPro" id="IPR022750">
    <property type="entry name" value="Interferon_reg_fac2-bd1_2_Znf"/>
</dbReference>
<dbReference type="PANTHER" id="PTHR10816:SF14">
    <property type="entry name" value="E3 UBIQUITIN-PROTEIN LIGASE IRF2BPL-RELATED"/>
    <property type="match status" value="1"/>
</dbReference>
<dbReference type="PANTHER" id="PTHR10816">
    <property type="entry name" value="MYELIN TRANSCRIPTION FACTOR 1-RELATED"/>
    <property type="match status" value="1"/>
</dbReference>
<dbReference type="Pfam" id="PF11261">
    <property type="entry name" value="IRF-2BP1_2"/>
    <property type="match status" value="1"/>
</dbReference>
<dbReference type="Pfam" id="PF25457">
    <property type="entry name" value="IRF-2BP1_2_M"/>
    <property type="match status" value="1"/>
</dbReference>
<dbReference type="Pfam" id="PF25454">
    <property type="entry name" value="zf-C3HC4_IRF-2BP1_2"/>
    <property type="match status" value="1"/>
</dbReference>
<dbReference type="SUPFAM" id="SSF57850">
    <property type="entry name" value="RING/U-box"/>
    <property type="match status" value="1"/>
</dbReference>
<sequence>MSAAQVSSSRRQSCYLCDLPRMPWAMIWDFSEPVCRGCVNYEGADRIEFVIETARQLKRAHGCFQDGRSPGPPPPVGVKTVALSAKEAAAAAAAAAAAAAAAQQQQQQQQQQQQQQQQQQQQQQQLNHVDGSSKPAVLAAPSGLERYGLSAAAAAAAAAAAAVEQRSRFEYPPPPVSLGSSSHATRLPNGLGGPNGFPKPTPEEGPPELNRQSPNSSSAAASVASRRGTHGGLVTGLPNPGGGGGPQLTVPPNLLPQTLLNGPASAAVLPPPPPHALGSRGPPTPAPPGAPGGPACLGGTPGVSATSSSASSSTSSSVAEVGVGAGGKRPGSVSSTDQERELKEKQRNAEALAELSESLRNRAEEWANKPKMVRDTLLTLAGCTPYEVRFKKDHSLLGRVFAFDAVSKPGMDYELKLFIEYPTGSGNVYSSASGVAKQMYQDCMKDFGRGLSSGFKYLEYEKKHGSGDWRLLGDLLPEAVRFFKEGVPGADMLPQPYLDASCPMLPTALVSLSRAPSAPPGTGTLPPAAPSGRGAAASLRKRKASPEPPDSAEGALKLGEEQQRQQWMANQSEALKLTMSAGGFAAPGHAAGGPPPPPPPLGPHSNRTTPPESAPQNGPSPMAALMSVADTLGTAHSPKDGSSVHSTTASARRNSSSPVSPASVPGQRRLASRNGDLNLQVAPPPPSAHPGMDQVHPQNIPDSPMANSGPLCCTICHERLEDTHFVQCPSVPSHKFCFPCSRESIKAQGASGEVYCPSGEKCPLVGSNVPWAFMQGEIATILAGDVKVKKERDP</sequence>
<evidence type="ECO:0000250" key="1">
    <source>
        <dbReference type="UniProtKB" id="Q5EIC4"/>
    </source>
</evidence>
<evidence type="ECO:0000250" key="2">
    <source>
        <dbReference type="UniProtKB" id="Q9H1B7"/>
    </source>
</evidence>
<evidence type="ECO:0000255" key="3"/>
<evidence type="ECO:0000256" key="4">
    <source>
        <dbReference type="SAM" id="MobiDB-lite"/>
    </source>
</evidence>
<evidence type="ECO:0000269" key="5">
    <source>
    </source>
</evidence>
<evidence type="ECO:0000305" key="6"/>
<comment type="function">
    <text evidence="1 2">Probable E3 ubiquitin protein ligase involved in the proteasome-mediated ubiquitin-dependent degradation of target proteins. Through the degradation of CTNNB1, functions downstream of FOXF2 to negatively regulate the Wnt signaling pathway. Probably plays a role in the development of the central nervous system and in neuronal maintenance (By similarity). Also acts as a transcriptional regulator of genes controlling female reproductive function. May play a role in gene transcription by transactivating GNRH1 promoter and repressing PENK promoter (By similarity).</text>
</comment>
<comment type="catalytic activity">
    <reaction evidence="2">
        <text>S-ubiquitinyl-[E2 ubiquitin-conjugating enzyme]-L-cysteine + [acceptor protein]-L-lysine = [E2 ubiquitin-conjugating enzyme]-L-cysteine + N(6)-ubiquitinyl-[acceptor protein]-L-lysine.</text>
        <dbReference type="EC" id="2.3.2.27"/>
    </reaction>
</comment>
<comment type="pathway">
    <text evidence="2">Protein modification; protein ubiquitination.</text>
</comment>
<comment type="subunit">
    <text evidence="2">Interacts with CTNNB1.</text>
</comment>
<comment type="subcellular location">
    <subcellularLocation>
        <location evidence="5">Nucleus</location>
    </subcellularLocation>
</comment>
<comment type="tissue specificity">
    <text evidence="5">Expressed in the regions of the hypothalamus involved in the control of GNRH1 secretion, such as arcuate nucleus.</text>
</comment>
<comment type="developmental stage">
    <text evidence="5">Up-regulated during puberty in the hypothalamus, but not in the cerebral cortex.</text>
</comment>
<comment type="similarity">
    <text evidence="6">Belongs to the IRF2BP family.</text>
</comment>
<proteinExistence type="evidence at transcript level"/>
<accession>Q2MJS2</accession>
<organism>
    <name type="scientific">Macaca mulatta</name>
    <name type="common">Rhesus macaque</name>
    <dbReference type="NCBI Taxonomy" id="9544"/>
    <lineage>
        <taxon>Eukaryota</taxon>
        <taxon>Metazoa</taxon>
        <taxon>Chordata</taxon>
        <taxon>Craniata</taxon>
        <taxon>Vertebrata</taxon>
        <taxon>Euteleostomi</taxon>
        <taxon>Mammalia</taxon>
        <taxon>Eutheria</taxon>
        <taxon>Euarchontoglires</taxon>
        <taxon>Primates</taxon>
        <taxon>Haplorrhini</taxon>
        <taxon>Catarrhini</taxon>
        <taxon>Cercopithecidae</taxon>
        <taxon>Cercopithecinae</taxon>
        <taxon>Macaca</taxon>
    </lineage>
</organism>
<reference key="1">
    <citation type="journal article" date="2007" name="J. Clin. Invest.">
        <title>Enhanced at puberty 1 (EAP1) is a new transcriptional regulator of the female neuroendocrine reproductive axis.</title>
        <authorList>
            <person name="Heger S."/>
            <person name="Mastronardi C."/>
            <person name="Dissen G.A."/>
            <person name="Lomniczi A."/>
            <person name="Cabrera R."/>
            <person name="Roth C.L."/>
            <person name="Jung H."/>
            <person name="Galimi F."/>
            <person name="Sippell W."/>
            <person name="Ojeda S.R."/>
        </authorList>
    </citation>
    <scope>NUCLEOTIDE SEQUENCE [GENOMIC DNA]</scope>
    <scope>SUBCELLULAR LOCATION</scope>
    <scope>TISSUE SPECIFICITY</scope>
    <scope>DEVELOPMENTAL STAGE</scope>
</reference>
<keyword id="KW-0175">Coiled coil</keyword>
<keyword id="KW-1017">Isopeptide bond</keyword>
<keyword id="KW-0479">Metal-binding</keyword>
<keyword id="KW-0539">Nucleus</keyword>
<keyword id="KW-0597">Phosphoprotein</keyword>
<keyword id="KW-1185">Reference proteome</keyword>
<keyword id="KW-0808">Transferase</keyword>
<keyword id="KW-0832">Ubl conjugation</keyword>
<keyword id="KW-0862">Zinc</keyword>
<keyword id="KW-0863">Zinc-finger</keyword>
<name>I2BPL_MACMU</name>
<protein>
    <recommendedName>
        <fullName evidence="2">Probable E3 ubiquitin-protein ligase IRF2BPL</fullName>
        <ecNumber evidence="2">2.3.2.27</ecNumber>
    </recommendedName>
    <alternativeName>
        <fullName>Enhanced at puberty protein 1</fullName>
    </alternativeName>
    <alternativeName>
        <fullName>Interferon regulatory factor 2-binding protein-like</fullName>
    </alternativeName>
</protein>
<gene>
    <name type="primary">IRF2BPL</name>
    <name type="synonym">EAP1</name>
</gene>